<reference key="1">
    <citation type="journal article" date="2001" name="Microb. Drug Resist.">
        <title>Annotated draft genomic sequence from a Streptococcus pneumoniae type 19F clinical isolate.</title>
        <authorList>
            <person name="Dopazo J."/>
            <person name="Mendoza A."/>
            <person name="Herrero J."/>
            <person name="Caldara F."/>
            <person name="Humbert Y."/>
            <person name="Friedli L."/>
            <person name="Guerrier M."/>
            <person name="Grand-Schenk E."/>
            <person name="Gandin C."/>
            <person name="de Francesco M."/>
            <person name="Polissi A."/>
            <person name="Buell G."/>
            <person name="Feger G."/>
            <person name="Garcia E."/>
            <person name="Peitsch M."/>
            <person name="Garcia-Bustos J.F."/>
        </authorList>
    </citation>
    <scope>NUCLEOTIDE SEQUENCE [LARGE SCALE GENOMIC DNA]</scope>
    <source>
        <strain>G54</strain>
    </source>
</reference>
<reference key="2">
    <citation type="submission" date="2008-03" db="EMBL/GenBank/DDBJ databases">
        <title>Pneumococcal beta glucoside metabolism investigated by whole genome comparison.</title>
        <authorList>
            <person name="Mulas L."/>
            <person name="Trappetti C."/>
            <person name="Hakenbeck R."/>
            <person name="Iannelli F."/>
            <person name="Pozzi G."/>
            <person name="Davidsen T.M."/>
            <person name="Tettelin H."/>
            <person name="Oggioni M."/>
        </authorList>
    </citation>
    <scope>NUCLEOTIDE SEQUENCE [LARGE SCALE GENOMIC DNA]</scope>
    <source>
        <strain>G54</strain>
    </source>
</reference>
<protein>
    <recommendedName>
        <fullName evidence="1">DNA-directed RNA polymerase subunit beta</fullName>
        <shortName evidence="1">RNAP subunit beta</shortName>
        <ecNumber evidence="1">2.7.7.6</ecNumber>
    </recommendedName>
    <alternativeName>
        <fullName evidence="1">RNA polymerase subunit beta</fullName>
    </alternativeName>
    <alternativeName>
        <fullName evidence="1">Transcriptase subunit beta</fullName>
    </alternativeName>
</protein>
<name>RPOB_STRP4</name>
<accession>B5E2F3</accession>
<sequence length="1203" mass="134317">MAGHDVQYGKHRTRRSFSRIKEVLDLPNLIEIQTDSFKAFLDHGLKEVFEDVLPISNFTDTMELEFVGYEIKEPKYTLEEARIHDASYSAPIFVTFRLINKETGEIKTQEVFFGDFPIMTEMGTFIINGGERIIVSQLVRSPGVYFNDKVDKNGKVGYGSTVIPNRGAWLELESDSKDITYTRIDRTRKIPFTTLVRALGFSGDDEIFDIFGDSELVRNTVEKDIHKNPMDSRTDEALKEIYERLRPGEPKTAESSRSLLVARFFDPRRYDLAAVGRYKINKKLNVKTRLLNQTIAEPLVDPETGEILVEAGTIMTRSVIESIESHLDGDLNKIVYIPNDAAVVTEPVVLQKFKVVAPTDPDRVVTIIGNANPDDKVRTVTPADILAEMSYFLNLAEGLGRVDDIDHLGNRRIRAVGELLANQVRLGLSRMERNVRERMSVQDNEVLTPQQIINIRPVTAAVKEFFGSSQLSQFMDQHNPLSELSHKRRLSALGPGGLTRDRAGYEVRDVHYTHYGRMCPIETPEGPNIGLINNLSSYGHLNKYGFVQTPYRKVDRETGVVTNEIVWLTADEEDEYTVAQANSRLNEDGTFAEKIVMGRHQGVNQEYPANIVDYMDVSPKQVVAVATACIPFLENDDSNRALMGANMQRQAVPLINPQAPYVGTGMEYQAAHDSGAAVIAQYNGKVTYADADKVEVRREDGSLDVYHIQKFRRSNSGTAYNQRTLVKVGDVVEKGDFIADGPSMENGEMALGQNPIVAYMTWEGYNFEDAVIMSERLVKDDVYTSVHLEEYESETRDTKLGPEEITREIPNVGEDALKDLDEMGIIRIGAEVKEGDILVGKVTPKGEKDLSAEERLLHAIFGDKSREVRDTSLRVPHGADGVVRDVKIFTRVNGDELQSGVNMLVRVYIAQKRKIKVGDKMAGRHGNKGVVSRIVPVEDMPYLPDGTPVDIMLNPLGVPSRMNIGQVMELHLGMAARTLGIHIATPVFDGASSEDLWSTVKEAGMDSDAKTILYDGRTGEPFDNRVSVGVMYMIKLHHMVDDKLHARSVGPYSTVTQQPLGGKAQFGGQRFGEMEVWALEAYGASNVLQEILTYKSDDINGRLKAYEAITKGKPIPKPGVPESFRVLVKELQSLGLDMRVLDEDDQEVELRDLDEGMDEDVIHVDDLEKAREKAAQEAKAAFEAEEAEKATKAEATEEAAEQE</sequence>
<gene>
    <name evidence="1" type="primary">rpoB</name>
    <name type="ordered locus">SPG_1862</name>
</gene>
<keyword id="KW-0240">DNA-directed RNA polymerase</keyword>
<keyword id="KW-0548">Nucleotidyltransferase</keyword>
<keyword id="KW-0804">Transcription</keyword>
<keyword id="KW-0808">Transferase</keyword>
<feature type="chain" id="PRO_1000141742" description="DNA-directed RNA polymerase subunit beta">
    <location>
        <begin position="1"/>
        <end position="1203"/>
    </location>
</feature>
<feature type="region of interest" description="Disordered" evidence="2">
    <location>
        <begin position="1174"/>
        <end position="1203"/>
    </location>
</feature>
<feature type="compositionally biased region" description="Basic and acidic residues" evidence="2">
    <location>
        <begin position="1174"/>
        <end position="1195"/>
    </location>
</feature>
<dbReference type="EC" id="2.7.7.6" evidence="1"/>
<dbReference type="EMBL" id="CP001015">
    <property type="protein sequence ID" value="ACF55055.1"/>
    <property type="molecule type" value="Genomic_DNA"/>
</dbReference>
<dbReference type="SMR" id="B5E2F3"/>
<dbReference type="KEGG" id="spx:SPG_1862"/>
<dbReference type="HOGENOM" id="CLU_000524_4_1_9"/>
<dbReference type="GO" id="GO:0000428">
    <property type="term" value="C:DNA-directed RNA polymerase complex"/>
    <property type="evidence" value="ECO:0007669"/>
    <property type="project" value="UniProtKB-KW"/>
</dbReference>
<dbReference type="GO" id="GO:0003677">
    <property type="term" value="F:DNA binding"/>
    <property type="evidence" value="ECO:0007669"/>
    <property type="project" value="UniProtKB-UniRule"/>
</dbReference>
<dbReference type="GO" id="GO:0003899">
    <property type="term" value="F:DNA-directed RNA polymerase activity"/>
    <property type="evidence" value="ECO:0007669"/>
    <property type="project" value="UniProtKB-UniRule"/>
</dbReference>
<dbReference type="GO" id="GO:0032549">
    <property type="term" value="F:ribonucleoside binding"/>
    <property type="evidence" value="ECO:0007669"/>
    <property type="project" value="InterPro"/>
</dbReference>
<dbReference type="GO" id="GO:0006351">
    <property type="term" value="P:DNA-templated transcription"/>
    <property type="evidence" value="ECO:0007669"/>
    <property type="project" value="UniProtKB-UniRule"/>
</dbReference>
<dbReference type="CDD" id="cd00653">
    <property type="entry name" value="RNA_pol_B_RPB2"/>
    <property type="match status" value="1"/>
</dbReference>
<dbReference type="Gene3D" id="2.40.50.100">
    <property type="match status" value="1"/>
</dbReference>
<dbReference type="Gene3D" id="2.40.50.150">
    <property type="match status" value="1"/>
</dbReference>
<dbReference type="Gene3D" id="3.90.1100.10">
    <property type="match status" value="2"/>
</dbReference>
<dbReference type="Gene3D" id="2.30.150.10">
    <property type="entry name" value="DNA-directed RNA polymerase, beta subunit, external 1 domain"/>
    <property type="match status" value="1"/>
</dbReference>
<dbReference type="Gene3D" id="2.40.270.10">
    <property type="entry name" value="DNA-directed RNA polymerase, subunit 2, domain 6"/>
    <property type="match status" value="1"/>
</dbReference>
<dbReference type="Gene3D" id="3.90.1800.10">
    <property type="entry name" value="RNA polymerase alpha subunit dimerisation domain"/>
    <property type="match status" value="1"/>
</dbReference>
<dbReference type="Gene3D" id="3.90.1110.10">
    <property type="entry name" value="RNA polymerase Rpb2, domain 2"/>
    <property type="match status" value="1"/>
</dbReference>
<dbReference type="HAMAP" id="MF_01321">
    <property type="entry name" value="RNApol_bact_RpoB"/>
    <property type="match status" value="1"/>
</dbReference>
<dbReference type="InterPro" id="IPR042107">
    <property type="entry name" value="DNA-dir_RNA_pol_bsu_ext_1_sf"/>
</dbReference>
<dbReference type="InterPro" id="IPR019462">
    <property type="entry name" value="DNA-dir_RNA_pol_bsu_external_1"/>
</dbReference>
<dbReference type="InterPro" id="IPR015712">
    <property type="entry name" value="DNA-dir_RNA_pol_su2"/>
</dbReference>
<dbReference type="InterPro" id="IPR007120">
    <property type="entry name" value="DNA-dir_RNAP_su2_dom"/>
</dbReference>
<dbReference type="InterPro" id="IPR037033">
    <property type="entry name" value="DNA-dir_RNAP_su2_hyb_sf"/>
</dbReference>
<dbReference type="InterPro" id="IPR010243">
    <property type="entry name" value="RNA_pol_bsu_bac"/>
</dbReference>
<dbReference type="InterPro" id="IPR007121">
    <property type="entry name" value="RNA_pol_bsu_CS"/>
</dbReference>
<dbReference type="InterPro" id="IPR007644">
    <property type="entry name" value="RNA_pol_bsu_protrusion"/>
</dbReference>
<dbReference type="InterPro" id="IPR007642">
    <property type="entry name" value="RNA_pol_Rpb2_2"/>
</dbReference>
<dbReference type="InterPro" id="IPR037034">
    <property type="entry name" value="RNA_pol_Rpb2_2_sf"/>
</dbReference>
<dbReference type="InterPro" id="IPR007645">
    <property type="entry name" value="RNA_pol_Rpb2_3"/>
</dbReference>
<dbReference type="InterPro" id="IPR007641">
    <property type="entry name" value="RNA_pol_Rpb2_7"/>
</dbReference>
<dbReference type="InterPro" id="IPR014724">
    <property type="entry name" value="RNA_pol_RPB2_OB-fold"/>
</dbReference>
<dbReference type="NCBIfam" id="NF001616">
    <property type="entry name" value="PRK00405.1"/>
    <property type="match status" value="1"/>
</dbReference>
<dbReference type="NCBIfam" id="TIGR02013">
    <property type="entry name" value="rpoB"/>
    <property type="match status" value="1"/>
</dbReference>
<dbReference type="PANTHER" id="PTHR20856">
    <property type="entry name" value="DNA-DIRECTED RNA POLYMERASE I SUBUNIT 2"/>
    <property type="match status" value="1"/>
</dbReference>
<dbReference type="Pfam" id="PF04563">
    <property type="entry name" value="RNA_pol_Rpb2_1"/>
    <property type="match status" value="1"/>
</dbReference>
<dbReference type="Pfam" id="PF04561">
    <property type="entry name" value="RNA_pol_Rpb2_2"/>
    <property type="match status" value="2"/>
</dbReference>
<dbReference type="Pfam" id="PF04565">
    <property type="entry name" value="RNA_pol_Rpb2_3"/>
    <property type="match status" value="1"/>
</dbReference>
<dbReference type="Pfam" id="PF10385">
    <property type="entry name" value="RNA_pol_Rpb2_45"/>
    <property type="match status" value="1"/>
</dbReference>
<dbReference type="Pfam" id="PF00562">
    <property type="entry name" value="RNA_pol_Rpb2_6"/>
    <property type="match status" value="1"/>
</dbReference>
<dbReference type="Pfam" id="PF04560">
    <property type="entry name" value="RNA_pol_Rpb2_7"/>
    <property type="match status" value="1"/>
</dbReference>
<dbReference type="SUPFAM" id="SSF64484">
    <property type="entry name" value="beta and beta-prime subunits of DNA dependent RNA-polymerase"/>
    <property type="match status" value="1"/>
</dbReference>
<dbReference type="PROSITE" id="PS01166">
    <property type="entry name" value="RNA_POL_BETA"/>
    <property type="match status" value="1"/>
</dbReference>
<proteinExistence type="inferred from homology"/>
<evidence type="ECO:0000255" key="1">
    <source>
        <dbReference type="HAMAP-Rule" id="MF_01321"/>
    </source>
</evidence>
<evidence type="ECO:0000256" key="2">
    <source>
        <dbReference type="SAM" id="MobiDB-lite"/>
    </source>
</evidence>
<organism>
    <name type="scientific">Streptococcus pneumoniae serotype 19F (strain G54)</name>
    <dbReference type="NCBI Taxonomy" id="512566"/>
    <lineage>
        <taxon>Bacteria</taxon>
        <taxon>Bacillati</taxon>
        <taxon>Bacillota</taxon>
        <taxon>Bacilli</taxon>
        <taxon>Lactobacillales</taxon>
        <taxon>Streptococcaceae</taxon>
        <taxon>Streptococcus</taxon>
    </lineage>
</organism>
<comment type="function">
    <text evidence="1">DNA-dependent RNA polymerase catalyzes the transcription of DNA into RNA using the four ribonucleoside triphosphates as substrates.</text>
</comment>
<comment type="catalytic activity">
    <reaction evidence="1">
        <text>RNA(n) + a ribonucleoside 5'-triphosphate = RNA(n+1) + diphosphate</text>
        <dbReference type="Rhea" id="RHEA:21248"/>
        <dbReference type="Rhea" id="RHEA-COMP:14527"/>
        <dbReference type="Rhea" id="RHEA-COMP:17342"/>
        <dbReference type="ChEBI" id="CHEBI:33019"/>
        <dbReference type="ChEBI" id="CHEBI:61557"/>
        <dbReference type="ChEBI" id="CHEBI:140395"/>
        <dbReference type="EC" id="2.7.7.6"/>
    </reaction>
</comment>
<comment type="subunit">
    <text evidence="1">The RNAP catalytic core consists of 2 alpha, 1 beta, 1 beta' and 1 omega subunit. When a sigma factor is associated with the core the holoenzyme is formed, which can initiate transcription.</text>
</comment>
<comment type="similarity">
    <text evidence="1">Belongs to the RNA polymerase beta chain family.</text>
</comment>